<accession>Q28062</accession>
<feature type="signal peptide" evidence="4">
    <location>
        <begin position="1"/>
        <end position="22"/>
    </location>
</feature>
<feature type="chain" id="PRO_0000017509" description="Brevican core protein">
    <location>
        <begin position="23"/>
        <end position="912"/>
    </location>
</feature>
<feature type="domain" description="Ig-like V-type">
    <location>
        <begin position="36"/>
        <end position="155"/>
    </location>
</feature>
<feature type="domain" description="Link 1" evidence="8">
    <location>
        <begin position="157"/>
        <end position="252"/>
    </location>
</feature>
<feature type="domain" description="Link 2" evidence="8">
    <location>
        <begin position="257"/>
        <end position="354"/>
    </location>
</feature>
<feature type="domain" description="EGF-like" evidence="6">
    <location>
        <begin position="647"/>
        <end position="683"/>
    </location>
</feature>
<feature type="domain" description="C-type lectin" evidence="5">
    <location>
        <begin position="683"/>
        <end position="811"/>
    </location>
</feature>
<feature type="domain" description="Sushi" evidence="7">
    <location>
        <begin position="814"/>
        <end position="874"/>
    </location>
</feature>
<feature type="region of interest" description="Disordered" evidence="9">
    <location>
        <begin position="408"/>
        <end position="427"/>
    </location>
</feature>
<feature type="region of interest" description="Disordered" evidence="9">
    <location>
        <begin position="438"/>
        <end position="651"/>
    </location>
</feature>
<feature type="compositionally biased region" description="Basic and acidic residues" evidence="9">
    <location>
        <begin position="448"/>
        <end position="463"/>
    </location>
</feature>
<feature type="compositionally biased region" description="Acidic residues" evidence="9">
    <location>
        <begin position="464"/>
        <end position="478"/>
    </location>
</feature>
<feature type="compositionally biased region" description="Pro residues" evidence="9">
    <location>
        <begin position="520"/>
        <end position="537"/>
    </location>
</feature>
<feature type="compositionally biased region" description="Basic and acidic residues" evidence="9">
    <location>
        <begin position="603"/>
        <end position="617"/>
    </location>
</feature>
<feature type="modified residue" description="Phosphoserine" evidence="2">
    <location>
        <position position="418"/>
    </location>
</feature>
<feature type="glycosylation site" description="N-linked (GlcNAc...) asparagine" evidence="4">
    <location>
        <position position="130"/>
    </location>
</feature>
<feature type="glycosylation site" description="N-linked (GlcNAc...) asparagine" evidence="4">
    <location>
        <position position="337"/>
    </location>
</feature>
<feature type="glycosylation site" description="O-linked (Xyl...) (chondroitin sulfate) serine" evidence="3">
    <location>
        <position position="418"/>
    </location>
</feature>
<feature type="disulfide bond" evidence="1">
    <location>
        <begin position="57"/>
        <end position="137"/>
    </location>
</feature>
<feature type="disulfide bond" evidence="1">
    <location>
        <begin position="179"/>
        <end position="250"/>
    </location>
</feature>
<feature type="disulfide bond" evidence="1">
    <location>
        <begin position="203"/>
        <end position="224"/>
    </location>
</feature>
<feature type="disulfide bond" evidence="1">
    <location>
        <begin position="277"/>
        <end position="352"/>
    </location>
</feature>
<feature type="disulfide bond" evidence="1">
    <location>
        <begin position="301"/>
        <end position="322"/>
    </location>
</feature>
<feature type="disulfide bond" evidence="1">
    <location>
        <begin position="651"/>
        <end position="662"/>
    </location>
</feature>
<feature type="disulfide bond" evidence="1">
    <location>
        <begin position="656"/>
        <end position="671"/>
    </location>
</feature>
<feature type="disulfide bond" evidence="1">
    <location>
        <begin position="673"/>
        <end position="682"/>
    </location>
</feature>
<feature type="disulfide bond" evidence="1">
    <location>
        <begin position="689"/>
        <end position="700"/>
    </location>
</feature>
<feature type="disulfide bond" evidence="1">
    <location>
        <begin position="717"/>
        <end position="809"/>
    </location>
</feature>
<feature type="disulfide bond" evidence="1">
    <location>
        <begin position="785"/>
        <end position="801"/>
    </location>
</feature>
<feature type="disulfide bond" evidence="1">
    <location>
        <begin position="816"/>
        <end position="859"/>
    </location>
</feature>
<feature type="disulfide bond" evidence="1">
    <location>
        <begin position="845"/>
        <end position="872"/>
    </location>
</feature>
<gene>
    <name type="primary">BCAN</name>
</gene>
<proteinExistence type="evidence at protein level"/>
<evidence type="ECO:0000250" key="1"/>
<evidence type="ECO:0000250" key="2">
    <source>
        <dbReference type="UniProtKB" id="P55068"/>
    </source>
</evidence>
<evidence type="ECO:0000250" key="3">
    <source>
        <dbReference type="UniProtKB" id="Q96GW7"/>
    </source>
</evidence>
<evidence type="ECO:0000255" key="4"/>
<evidence type="ECO:0000255" key="5">
    <source>
        <dbReference type="PROSITE-ProRule" id="PRU00040"/>
    </source>
</evidence>
<evidence type="ECO:0000255" key="6">
    <source>
        <dbReference type="PROSITE-ProRule" id="PRU00076"/>
    </source>
</evidence>
<evidence type="ECO:0000255" key="7">
    <source>
        <dbReference type="PROSITE-ProRule" id="PRU00302"/>
    </source>
</evidence>
<evidence type="ECO:0000255" key="8">
    <source>
        <dbReference type="PROSITE-ProRule" id="PRU00323"/>
    </source>
</evidence>
<evidence type="ECO:0000256" key="9">
    <source>
        <dbReference type="SAM" id="MobiDB-lite"/>
    </source>
</evidence>
<evidence type="ECO:0000305" key="10"/>
<reference key="1">
    <citation type="journal article" date="1994" name="J. Biol. Chem.">
        <title>Molecular cloning of brevican, a novel brain proteoglycan of the aggrecan/versican family.</title>
        <authorList>
            <person name="Yamada H."/>
            <person name="Watanabe K."/>
            <person name="Shimonaka M."/>
            <person name="Yamaguchi Y."/>
        </authorList>
    </citation>
    <scope>NUCLEOTIDE SEQUENCE [MRNA]</scope>
    <scope>PARTIAL PROTEIN SEQUENCE</scope>
    <source>
        <tissue>Brain</tissue>
    </source>
</reference>
<organism>
    <name type="scientific">Bos taurus</name>
    <name type="common">Bovine</name>
    <dbReference type="NCBI Taxonomy" id="9913"/>
    <lineage>
        <taxon>Eukaryota</taxon>
        <taxon>Metazoa</taxon>
        <taxon>Chordata</taxon>
        <taxon>Craniata</taxon>
        <taxon>Vertebrata</taxon>
        <taxon>Euteleostomi</taxon>
        <taxon>Mammalia</taxon>
        <taxon>Eutheria</taxon>
        <taxon>Laurasiatheria</taxon>
        <taxon>Artiodactyla</taxon>
        <taxon>Ruminantia</taxon>
        <taxon>Pecora</taxon>
        <taxon>Bovidae</taxon>
        <taxon>Bovinae</taxon>
        <taxon>Bos</taxon>
    </lineage>
</organism>
<sequence>MAPLFLPLLATLVLAWIPVALADALEGDSSEDRAFRVRIAGDAPLQGVLGGALTIPCHVHYLRPSPSRRAAQGSPRVKWTFLSGGREAEVLVARGLRVKVSEAYRFRVALPAYPASLTDVSLVLSELRPNDSGIYRCEVQHGIDDSSDAVEVKVKGVVFLYREGSARYAFSFAGAQEACARIGARIATPEQLYAAYLGGYEQCDAGWLSDQTVRYPIQTPREACYGDMDGFPGVRNYGVVDPDDLYDVYCYAEELNGELFLGAPPDKLTLEEARTYCQERGAKIATTGQLYAAWDGGLDRCSSGWLSDGSVRYPIVTPSQRCGGGLPGVKTLFLFPNQTGFPNKHSRFNVYCFRDSAQPSAIPEAANPASHLASDALEAIVTVTETLEELKLPQEAVESESRGAIYSIPIIEDGGGGSSTPEDPAEAPRTLLEFETQSIVPPLGSSEEEGKVLEQEEKYRGEEEKEEEEEEEEVEDEALWAWPSELSSLDPEAPLPTEPVPEESLTQASPPVRAALQPGVSPPPYDEPEAPRPPRVLGPPTKTLPTPREGNLASPPPSTLVGAREIEEETGGPELSGAPRGESEETGSSEDAPSLLPATRAPGDTRDLETPSEENSRRTVPAGTSVRAQPVLPTDSASRGGVAVAPSSGDCVPSPCHNGGTCLEEEEGVRCLCLPGYGGDLCDVGLHFCSPGWDAFQGACYKHFSARRSWEEAENKCRMYGAHLASISTPEEQDFINNRYREYQWIGLNDRTIEGDFLWSDGVPLLYENWNPGQPDSYFLSGENCVVMVWHDQGQWSDVPCNYHLSYTCKMGLVSCGPPPELPLAEVFGRPRLRYEVDTVLRYRCREGLTQRNLPLIRCQENGRWGLPQISCVPRRPARALRPVEAQEGRPWRLVGHWKARLNPSPNPAPGP</sequence>
<protein>
    <recommendedName>
        <fullName>Brevican core protein</fullName>
    </recommendedName>
</protein>
<name>PGCB_BOVIN</name>
<comment type="function">
    <text>May play a role in the terminally differentiating and the adult nervous system during postnatal development. Could stabilize interactions between hyaluronan (HA) and brain proteoglycans.</text>
</comment>
<comment type="subunit">
    <text evidence="1">Interacts with TNR.</text>
</comment>
<comment type="subcellular location">
    <subcellularLocation>
        <location evidence="1">Secreted</location>
        <location evidence="1">Extracellular space</location>
        <location evidence="1">Extracellular matrix</location>
    </subcellularLocation>
    <subcellularLocation>
        <location evidence="3">Secreted</location>
    </subcellularLocation>
</comment>
<comment type="tissue specificity">
    <text>Brain; expressed in cerebellar astrocytes but not in neurons.</text>
</comment>
<comment type="PTM">
    <text evidence="3">O-glycosylated; contains chondroitin sulfate.</text>
</comment>
<comment type="similarity">
    <text evidence="10">Belongs to the aggrecan/versican proteoglycan family.</text>
</comment>
<dbReference type="EMBL" id="X75887">
    <property type="protein sequence ID" value="CAA53481.1"/>
    <property type="molecule type" value="mRNA"/>
</dbReference>
<dbReference type="PIR" id="A54423">
    <property type="entry name" value="A54423"/>
</dbReference>
<dbReference type="SMR" id="Q28062"/>
<dbReference type="FunCoup" id="Q28062">
    <property type="interactions" value="925"/>
</dbReference>
<dbReference type="STRING" id="9913.ENSBTAP00000065021"/>
<dbReference type="GlyCosmos" id="Q28062">
    <property type="glycosylation" value="2 sites, No reported glycans"/>
</dbReference>
<dbReference type="GlyGen" id="Q28062">
    <property type="glycosylation" value="3 sites"/>
</dbReference>
<dbReference type="PaxDb" id="9913-ENSBTAP00000020965"/>
<dbReference type="eggNOG" id="KOG4297">
    <property type="taxonomic scope" value="Eukaryota"/>
</dbReference>
<dbReference type="InParanoid" id="Q28062"/>
<dbReference type="OrthoDB" id="5860362at2759"/>
<dbReference type="Proteomes" id="UP000009136">
    <property type="component" value="Unplaced"/>
</dbReference>
<dbReference type="GO" id="GO:0005615">
    <property type="term" value="C:extracellular space"/>
    <property type="evidence" value="ECO:0000318"/>
    <property type="project" value="GO_Central"/>
</dbReference>
<dbReference type="GO" id="GO:0072534">
    <property type="term" value="C:perineuronal net"/>
    <property type="evidence" value="ECO:0000318"/>
    <property type="project" value="GO_Central"/>
</dbReference>
<dbReference type="GO" id="GO:0045202">
    <property type="term" value="C:synapse"/>
    <property type="evidence" value="ECO:0000318"/>
    <property type="project" value="GO_Central"/>
</dbReference>
<dbReference type="GO" id="GO:0030246">
    <property type="term" value="F:carbohydrate binding"/>
    <property type="evidence" value="ECO:0007669"/>
    <property type="project" value="UniProtKB-KW"/>
</dbReference>
<dbReference type="GO" id="GO:0005540">
    <property type="term" value="F:hyaluronic acid binding"/>
    <property type="evidence" value="ECO:0007669"/>
    <property type="project" value="UniProtKB-KW"/>
</dbReference>
<dbReference type="GO" id="GO:0007155">
    <property type="term" value="P:cell adhesion"/>
    <property type="evidence" value="ECO:0007669"/>
    <property type="project" value="InterPro"/>
</dbReference>
<dbReference type="GO" id="GO:0007417">
    <property type="term" value="P:central nervous system development"/>
    <property type="evidence" value="ECO:0000318"/>
    <property type="project" value="GO_Central"/>
</dbReference>
<dbReference type="GO" id="GO:0001501">
    <property type="term" value="P:skeletal system development"/>
    <property type="evidence" value="ECO:0000318"/>
    <property type="project" value="GO_Central"/>
</dbReference>
<dbReference type="CDD" id="cd00033">
    <property type="entry name" value="CCP"/>
    <property type="match status" value="1"/>
</dbReference>
<dbReference type="CDD" id="cd00054">
    <property type="entry name" value="EGF_CA"/>
    <property type="match status" value="1"/>
</dbReference>
<dbReference type="CDD" id="cd03517">
    <property type="entry name" value="Link_domain_CSPGs_modules_1_3"/>
    <property type="match status" value="1"/>
</dbReference>
<dbReference type="CDD" id="cd03520">
    <property type="entry name" value="Link_domain_CSPGs_modules_2_4"/>
    <property type="match status" value="1"/>
</dbReference>
<dbReference type="FunFam" id="3.10.100.10:FF:000011">
    <property type="entry name" value="Aggrecan core protein"/>
    <property type="match status" value="1"/>
</dbReference>
<dbReference type="FunFam" id="2.60.40.10:FF:000698">
    <property type="entry name" value="brevican core protein"/>
    <property type="match status" value="1"/>
</dbReference>
<dbReference type="FunFam" id="2.10.25.10:FF:000012">
    <property type="entry name" value="Delta-like protein"/>
    <property type="match status" value="1"/>
</dbReference>
<dbReference type="FunFam" id="3.10.100.10:FF:000002">
    <property type="entry name" value="Hyaluronan proteoglycan link protein 1"/>
    <property type="match status" value="1"/>
</dbReference>
<dbReference type="FunFam" id="2.10.70.10:FF:000003">
    <property type="entry name" value="Versican core protein"/>
    <property type="match status" value="1"/>
</dbReference>
<dbReference type="FunFam" id="3.10.100.10:FF:000003">
    <property type="entry name" value="Versican core protein"/>
    <property type="match status" value="1"/>
</dbReference>
<dbReference type="Gene3D" id="2.10.70.10">
    <property type="entry name" value="Complement Module, domain 1"/>
    <property type="match status" value="1"/>
</dbReference>
<dbReference type="Gene3D" id="2.60.40.10">
    <property type="entry name" value="Immunoglobulins"/>
    <property type="match status" value="1"/>
</dbReference>
<dbReference type="Gene3D" id="2.10.25.10">
    <property type="entry name" value="Laminin"/>
    <property type="match status" value="1"/>
</dbReference>
<dbReference type="Gene3D" id="3.10.100.10">
    <property type="entry name" value="Mannose-Binding Protein A, subunit A"/>
    <property type="match status" value="3"/>
</dbReference>
<dbReference type="InterPro" id="IPR001304">
    <property type="entry name" value="C-type_lectin-like"/>
</dbReference>
<dbReference type="InterPro" id="IPR016186">
    <property type="entry name" value="C-type_lectin-like/link_sf"/>
</dbReference>
<dbReference type="InterPro" id="IPR018378">
    <property type="entry name" value="C-type_lectin_CS"/>
</dbReference>
<dbReference type="InterPro" id="IPR016187">
    <property type="entry name" value="CTDL_fold"/>
</dbReference>
<dbReference type="InterPro" id="IPR000742">
    <property type="entry name" value="EGF-like_dom"/>
</dbReference>
<dbReference type="InterPro" id="IPR050691">
    <property type="entry name" value="Hyaluronan_bind_Proteoglycan"/>
</dbReference>
<dbReference type="InterPro" id="IPR007110">
    <property type="entry name" value="Ig-like_dom"/>
</dbReference>
<dbReference type="InterPro" id="IPR036179">
    <property type="entry name" value="Ig-like_dom_sf"/>
</dbReference>
<dbReference type="InterPro" id="IPR013783">
    <property type="entry name" value="Ig-like_fold"/>
</dbReference>
<dbReference type="InterPro" id="IPR003006">
    <property type="entry name" value="Ig/MHC_CS"/>
</dbReference>
<dbReference type="InterPro" id="IPR003599">
    <property type="entry name" value="Ig_sub"/>
</dbReference>
<dbReference type="InterPro" id="IPR013106">
    <property type="entry name" value="Ig_V-set"/>
</dbReference>
<dbReference type="InterPro" id="IPR000538">
    <property type="entry name" value="Link_dom"/>
</dbReference>
<dbReference type="InterPro" id="IPR035976">
    <property type="entry name" value="Sushi/SCR/CCP_sf"/>
</dbReference>
<dbReference type="InterPro" id="IPR000436">
    <property type="entry name" value="Sushi_SCR_CCP_dom"/>
</dbReference>
<dbReference type="PANTHER" id="PTHR22804">
    <property type="entry name" value="AGGRECAN/VERSICAN PROTEOGLYCAN"/>
    <property type="match status" value="1"/>
</dbReference>
<dbReference type="PANTHER" id="PTHR22804:SF41">
    <property type="entry name" value="BREVICAN CORE PROTEIN"/>
    <property type="match status" value="1"/>
</dbReference>
<dbReference type="Pfam" id="PF00008">
    <property type="entry name" value="EGF"/>
    <property type="match status" value="1"/>
</dbReference>
<dbReference type="Pfam" id="PF00059">
    <property type="entry name" value="Lectin_C"/>
    <property type="match status" value="1"/>
</dbReference>
<dbReference type="Pfam" id="PF00084">
    <property type="entry name" value="Sushi"/>
    <property type="match status" value="1"/>
</dbReference>
<dbReference type="Pfam" id="PF07686">
    <property type="entry name" value="V-set"/>
    <property type="match status" value="1"/>
</dbReference>
<dbReference type="Pfam" id="PF00193">
    <property type="entry name" value="Xlink"/>
    <property type="match status" value="2"/>
</dbReference>
<dbReference type="PRINTS" id="PR01265">
    <property type="entry name" value="LINKMODULE"/>
</dbReference>
<dbReference type="SMART" id="SM00032">
    <property type="entry name" value="CCP"/>
    <property type="match status" value="1"/>
</dbReference>
<dbReference type="SMART" id="SM00034">
    <property type="entry name" value="CLECT"/>
    <property type="match status" value="1"/>
</dbReference>
<dbReference type="SMART" id="SM00181">
    <property type="entry name" value="EGF"/>
    <property type="match status" value="1"/>
</dbReference>
<dbReference type="SMART" id="SM00409">
    <property type="entry name" value="IG"/>
    <property type="match status" value="1"/>
</dbReference>
<dbReference type="SMART" id="SM00406">
    <property type="entry name" value="IGv"/>
    <property type="match status" value="1"/>
</dbReference>
<dbReference type="SMART" id="SM00445">
    <property type="entry name" value="LINK"/>
    <property type="match status" value="2"/>
</dbReference>
<dbReference type="SUPFAM" id="SSF56436">
    <property type="entry name" value="C-type lectin-like"/>
    <property type="match status" value="3"/>
</dbReference>
<dbReference type="SUPFAM" id="SSF57535">
    <property type="entry name" value="Complement control module/SCR domain"/>
    <property type="match status" value="1"/>
</dbReference>
<dbReference type="SUPFAM" id="SSF48726">
    <property type="entry name" value="Immunoglobulin"/>
    <property type="match status" value="1"/>
</dbReference>
<dbReference type="PROSITE" id="PS00615">
    <property type="entry name" value="C_TYPE_LECTIN_1"/>
    <property type="match status" value="1"/>
</dbReference>
<dbReference type="PROSITE" id="PS50041">
    <property type="entry name" value="C_TYPE_LECTIN_2"/>
    <property type="match status" value="1"/>
</dbReference>
<dbReference type="PROSITE" id="PS00022">
    <property type="entry name" value="EGF_1"/>
    <property type="match status" value="1"/>
</dbReference>
<dbReference type="PROSITE" id="PS01186">
    <property type="entry name" value="EGF_2"/>
    <property type="match status" value="1"/>
</dbReference>
<dbReference type="PROSITE" id="PS50026">
    <property type="entry name" value="EGF_3"/>
    <property type="match status" value="1"/>
</dbReference>
<dbReference type="PROSITE" id="PS50835">
    <property type="entry name" value="IG_LIKE"/>
    <property type="match status" value="1"/>
</dbReference>
<dbReference type="PROSITE" id="PS00290">
    <property type="entry name" value="IG_MHC"/>
    <property type="match status" value="1"/>
</dbReference>
<dbReference type="PROSITE" id="PS01241">
    <property type="entry name" value="LINK_1"/>
    <property type="match status" value="2"/>
</dbReference>
<dbReference type="PROSITE" id="PS50963">
    <property type="entry name" value="LINK_2"/>
    <property type="match status" value="2"/>
</dbReference>
<dbReference type="PROSITE" id="PS50923">
    <property type="entry name" value="SUSHI"/>
    <property type="match status" value="1"/>
</dbReference>
<keyword id="KW-0903">Direct protein sequencing</keyword>
<keyword id="KW-1015">Disulfide bond</keyword>
<keyword id="KW-0245">EGF-like domain</keyword>
<keyword id="KW-0272">Extracellular matrix</keyword>
<keyword id="KW-0325">Glycoprotein</keyword>
<keyword id="KW-0373">Hyaluronic acid</keyword>
<keyword id="KW-0393">Immunoglobulin domain</keyword>
<keyword id="KW-0430">Lectin</keyword>
<keyword id="KW-0597">Phosphoprotein</keyword>
<keyword id="KW-0654">Proteoglycan</keyword>
<keyword id="KW-1185">Reference proteome</keyword>
<keyword id="KW-0677">Repeat</keyword>
<keyword id="KW-0964">Secreted</keyword>
<keyword id="KW-0732">Signal</keyword>
<keyword id="KW-0768">Sushi</keyword>